<organism>
    <name type="scientific">Escherichia coli (strain K12)</name>
    <dbReference type="NCBI Taxonomy" id="83333"/>
    <lineage>
        <taxon>Bacteria</taxon>
        <taxon>Pseudomonadati</taxon>
        <taxon>Pseudomonadota</taxon>
        <taxon>Gammaproteobacteria</taxon>
        <taxon>Enterobacterales</taxon>
        <taxon>Enterobacteriaceae</taxon>
        <taxon>Escherichia</taxon>
    </lineage>
</organism>
<dbReference type="EC" id="3.1.1.5"/>
<dbReference type="EMBL" id="X03155">
    <property type="protein sequence ID" value="CAA26932.1"/>
    <property type="molecule type" value="Genomic_DNA"/>
</dbReference>
<dbReference type="EMBL" id="M87049">
    <property type="protein sequence ID" value="AAA67621.1"/>
    <property type="molecule type" value="Genomic_DNA"/>
</dbReference>
<dbReference type="EMBL" id="U00096">
    <property type="protein sequence ID" value="AAT48224.1"/>
    <property type="molecule type" value="Genomic_DNA"/>
</dbReference>
<dbReference type="EMBL" id="AP009048">
    <property type="protein sequence ID" value="BAE77476.1"/>
    <property type="molecule type" value="Genomic_DNA"/>
</dbReference>
<dbReference type="PIR" id="B65187">
    <property type="entry name" value="PSECL2"/>
</dbReference>
<dbReference type="RefSeq" id="WP_000487654.1">
    <property type="nucleotide sequence ID" value="NZ_STEB01000021.1"/>
</dbReference>
<dbReference type="RefSeq" id="YP_026266.1">
    <property type="nucleotide sequence ID" value="NC_000913.3"/>
</dbReference>
<dbReference type="SMR" id="P07000"/>
<dbReference type="BioGRID" id="4262616">
    <property type="interactions" value="220"/>
</dbReference>
<dbReference type="BioGRID" id="852611">
    <property type="interactions" value="11"/>
</dbReference>
<dbReference type="FunCoup" id="P07000">
    <property type="interactions" value="50"/>
</dbReference>
<dbReference type="IntAct" id="P07000">
    <property type="interactions" value="11"/>
</dbReference>
<dbReference type="STRING" id="511145.b3825"/>
<dbReference type="ESTHER" id="ecoli-pldb">
    <property type="family name" value="Monoglyceridelipase_lysophospholip"/>
</dbReference>
<dbReference type="PaxDb" id="511145-b3825"/>
<dbReference type="EnsemblBacteria" id="AAT48224">
    <property type="protein sequence ID" value="AAT48224"/>
    <property type="gene ID" value="b3825"/>
</dbReference>
<dbReference type="GeneID" id="93778112"/>
<dbReference type="GeneID" id="948314"/>
<dbReference type="KEGG" id="ecj:JW5584"/>
<dbReference type="KEGG" id="eco:b3825"/>
<dbReference type="KEGG" id="ecoc:C3026_20700"/>
<dbReference type="PATRIC" id="fig|1411691.4.peg.2882"/>
<dbReference type="EchoBASE" id="EB0732"/>
<dbReference type="eggNOG" id="COG2267">
    <property type="taxonomic scope" value="Bacteria"/>
</dbReference>
<dbReference type="HOGENOM" id="CLU_026209_10_1_6"/>
<dbReference type="InParanoid" id="P07000"/>
<dbReference type="OMA" id="AFDWRGQ"/>
<dbReference type="OrthoDB" id="9788260at2"/>
<dbReference type="PhylomeDB" id="P07000"/>
<dbReference type="BioCyc" id="EcoCyc:EG10739-MONOMER"/>
<dbReference type="BioCyc" id="MetaCyc:EG10739-MONOMER"/>
<dbReference type="PRO" id="PR:P07000"/>
<dbReference type="Proteomes" id="UP000000625">
    <property type="component" value="Chromosome"/>
</dbReference>
<dbReference type="GO" id="GO:0016020">
    <property type="term" value="C:membrane"/>
    <property type="evidence" value="ECO:0000314"/>
    <property type="project" value="EcoliWiki"/>
</dbReference>
<dbReference type="GO" id="GO:0005886">
    <property type="term" value="C:plasma membrane"/>
    <property type="evidence" value="ECO:0007669"/>
    <property type="project" value="UniProtKB-SubCell"/>
</dbReference>
<dbReference type="GO" id="GO:0016747">
    <property type="term" value="F:acyltransferase activity, transferring groups other than amino-acyl groups"/>
    <property type="evidence" value="ECO:0000314"/>
    <property type="project" value="EcoCyc"/>
</dbReference>
<dbReference type="GO" id="GO:0004622">
    <property type="term" value="F:lysophospholipase activity"/>
    <property type="evidence" value="ECO:0000314"/>
    <property type="project" value="EcoCyc"/>
</dbReference>
<dbReference type="GO" id="GO:0006650">
    <property type="term" value="P:glycerophospholipid metabolic process"/>
    <property type="evidence" value="ECO:0000315"/>
    <property type="project" value="EcoCyc"/>
</dbReference>
<dbReference type="FunFam" id="3.40.50.1820:FF:000020">
    <property type="entry name" value="Lysophospholipase L2"/>
    <property type="match status" value="1"/>
</dbReference>
<dbReference type="Gene3D" id="3.40.50.1820">
    <property type="entry name" value="alpha/beta hydrolase"/>
    <property type="match status" value="1"/>
</dbReference>
<dbReference type="InterPro" id="IPR029058">
    <property type="entry name" value="AB_hydrolase_fold"/>
</dbReference>
<dbReference type="InterPro" id="IPR022742">
    <property type="entry name" value="Hydrolase_4"/>
</dbReference>
<dbReference type="InterPro" id="IPR051044">
    <property type="entry name" value="MAG_DAG_Lipase"/>
</dbReference>
<dbReference type="NCBIfam" id="NF008019">
    <property type="entry name" value="PRK10749.1"/>
    <property type="match status" value="1"/>
</dbReference>
<dbReference type="PANTHER" id="PTHR11614">
    <property type="entry name" value="PHOSPHOLIPASE-RELATED"/>
    <property type="match status" value="1"/>
</dbReference>
<dbReference type="Pfam" id="PF12146">
    <property type="entry name" value="Hydrolase_4"/>
    <property type="match status" value="1"/>
</dbReference>
<dbReference type="SUPFAM" id="SSF53474">
    <property type="entry name" value="alpha/beta-Hydrolases"/>
    <property type="match status" value="1"/>
</dbReference>
<accession>P07000</accession>
<accession>P78127</accession>
<accession>Q2M8D0</accession>
<protein>
    <recommendedName>
        <fullName>Lysophospholipase L2</fullName>
        <ecNumber>3.1.1.5</ecNumber>
    </recommendedName>
    <alternativeName>
        <fullName>Lecithinase B</fullName>
    </alternativeName>
</protein>
<gene>
    <name type="primary">pldB</name>
    <name type="ordered locus">b3825</name>
    <name type="ordered locus">JW5584</name>
</gene>
<evidence type="ECO:0000305" key="1"/>
<keyword id="KW-0997">Cell inner membrane</keyword>
<keyword id="KW-1003">Cell membrane</keyword>
<keyword id="KW-0378">Hydrolase</keyword>
<keyword id="KW-0444">Lipid biosynthesis</keyword>
<keyword id="KW-0443">Lipid metabolism</keyword>
<keyword id="KW-0472">Membrane</keyword>
<keyword id="KW-1185">Reference proteome</keyword>
<feature type="chain" id="PRO_0000058456" description="Lysophospholipase L2">
    <location>
        <begin position="1"/>
        <end position="340"/>
    </location>
</feature>
<feature type="sequence conflict" description="In Ref. 2; AAA67621." evidence="1" ref="2">
    <original>P</original>
    <variation>A</variation>
    <location>
        <position position="164"/>
    </location>
</feature>
<feature type="sequence conflict" description="In Ref. 2; AAA67621." evidence="1" ref="2">
    <original>R</original>
    <variation>A</variation>
    <location>
        <position position="315"/>
    </location>
</feature>
<proteinExistence type="evidence at protein level"/>
<comment type="catalytic activity">
    <reaction>
        <text>a 1-acyl-sn-glycero-3-phosphocholine + H2O = sn-glycerol 3-phosphocholine + a fatty acid + H(+)</text>
        <dbReference type="Rhea" id="RHEA:15177"/>
        <dbReference type="ChEBI" id="CHEBI:15377"/>
        <dbReference type="ChEBI" id="CHEBI:15378"/>
        <dbReference type="ChEBI" id="CHEBI:16870"/>
        <dbReference type="ChEBI" id="CHEBI:28868"/>
        <dbReference type="ChEBI" id="CHEBI:58168"/>
        <dbReference type="EC" id="3.1.1.5"/>
    </reaction>
</comment>
<comment type="interaction">
    <interactant intactId="EBI-9134416">
        <id>P07000</id>
    </interactant>
    <interactant intactId="EBI-1120353">
        <id>Q46864</id>
        <label>mqsA</label>
    </interactant>
    <organismsDiffer>false</organismsDiffer>
    <experiments>2</experiments>
</comment>
<comment type="subcellular location">
    <subcellularLocation>
        <location>Cell inner membrane</location>
        <topology>Peripheral membrane protein</topology>
    </subcellularLocation>
</comment>
<comment type="miscellaneous">
    <text>In addition this protein catalyzes a transacylation reaction to produce acyl phosphatidylglycerol by transfer of the acidyl residue of 2-acyl lysophospholipid to phosphatidylglycerol.</text>
</comment>
<comment type="miscellaneous">
    <text>Lysophospholipases from various sources vary widely in molecular weight, substrate specificity, and subcellular localization.</text>
</comment>
<name>PLDB_ECOLI</name>
<sequence>MFQQQKDWETRENAFAAFTMGPLTDFWRQRDEAEFTGVDDIPVRFVRFRAQHHDRVVVICPGRIESYVKYAELAYDLFHLGFDVLIIDHRGQGRSGRLLADPHLGHVNRFNDYVDDLAAFWQQEVQPGPWRKRYILAHSMGGAISTLFLQRHPGVCDAIALTAPMFGIVIRMPSFMARQILNWAEAHPRFRDGYAIGTGRWRALPFAINVLTHSRQRYRRNLRFYADDPTIRVGGPTYHWVRESILAGEQVLAGAGDDATPTLLLQAEEERVVDNRMHDRFCELRTAAGHPVEGGRPLVIKGAYHEILFEKDAMRSVALHAIVDFFNRHNSPSGNRSTEV</sequence>
<reference key="1">
    <citation type="journal article" date="1985" name="J. Biochem.">
        <title>Nucleotide sequence of the pldB gene and characteristics of deduced amino acid sequence of lysophospholipase L2 in Escherichia coli.</title>
        <authorList>
            <person name="Kobayashi T."/>
            <person name="Kudo I."/>
            <person name="Karasawa K."/>
            <person name="Mizushima H."/>
            <person name="Inoue K."/>
            <person name="Nojima S."/>
        </authorList>
    </citation>
    <scope>NUCLEOTIDE SEQUENCE [GENOMIC DNA]</scope>
    <source>
        <strain>K12 / KL16-99</strain>
    </source>
</reference>
<reference key="2">
    <citation type="journal article" date="1992" name="Science">
        <title>Analysis of the Escherichia coli genome: DNA sequence of the region from 84.5 to 86.5 minutes.</title>
        <authorList>
            <person name="Daniels D.L."/>
            <person name="Plunkett G. III"/>
            <person name="Burland V.D."/>
            <person name="Blattner F.R."/>
        </authorList>
    </citation>
    <scope>NUCLEOTIDE SEQUENCE [LARGE SCALE GENOMIC DNA]</scope>
    <source>
        <strain>K12 / MG1655 / ATCC 47076</strain>
    </source>
</reference>
<reference key="3">
    <citation type="journal article" date="1997" name="Science">
        <title>The complete genome sequence of Escherichia coli K-12.</title>
        <authorList>
            <person name="Blattner F.R."/>
            <person name="Plunkett G. III"/>
            <person name="Bloch C.A."/>
            <person name="Perna N.T."/>
            <person name="Burland V."/>
            <person name="Riley M."/>
            <person name="Collado-Vides J."/>
            <person name="Glasner J.D."/>
            <person name="Rode C.K."/>
            <person name="Mayhew G.F."/>
            <person name="Gregor J."/>
            <person name="Davis N.W."/>
            <person name="Kirkpatrick H.A."/>
            <person name="Goeden M.A."/>
            <person name="Rose D.J."/>
            <person name="Mau B."/>
            <person name="Shao Y."/>
        </authorList>
    </citation>
    <scope>NUCLEOTIDE SEQUENCE [LARGE SCALE GENOMIC DNA]</scope>
    <scope>SEQUENCE REVISION TO 164</scope>
    <source>
        <strain>K12 / MG1655 / ATCC 47076</strain>
    </source>
</reference>
<reference key="4">
    <citation type="journal article" date="2006" name="Nucleic Acids Res.">
        <title>Escherichia coli K-12: a cooperatively developed annotation snapshot -- 2005.</title>
        <authorList>
            <person name="Riley M."/>
            <person name="Abe T."/>
            <person name="Arnaud M.B."/>
            <person name="Berlyn M.K.B."/>
            <person name="Blattner F.R."/>
            <person name="Chaudhuri R.R."/>
            <person name="Glasner J.D."/>
            <person name="Horiuchi T."/>
            <person name="Keseler I.M."/>
            <person name="Kosuge T."/>
            <person name="Mori H."/>
            <person name="Perna N.T."/>
            <person name="Plunkett G. III"/>
            <person name="Rudd K.E."/>
            <person name="Serres M.H."/>
            <person name="Thomas G.H."/>
            <person name="Thomson N.R."/>
            <person name="Wishart D."/>
            <person name="Wanner B.L."/>
        </authorList>
    </citation>
    <scope>SEQUENCE REVISION TO 315</scope>
</reference>
<reference key="5">
    <citation type="journal article" date="2006" name="Mol. Syst. Biol.">
        <title>Highly accurate genome sequences of Escherichia coli K-12 strains MG1655 and W3110.</title>
        <authorList>
            <person name="Hayashi K."/>
            <person name="Morooka N."/>
            <person name="Yamamoto Y."/>
            <person name="Fujita K."/>
            <person name="Isono K."/>
            <person name="Choi S."/>
            <person name="Ohtsubo E."/>
            <person name="Baba T."/>
            <person name="Wanner B.L."/>
            <person name="Mori H."/>
            <person name="Horiuchi T."/>
        </authorList>
    </citation>
    <scope>NUCLEOTIDE SEQUENCE [LARGE SCALE GENOMIC DNA]</scope>
    <source>
        <strain>K12 / W3110 / ATCC 27325 / DSM 5911</strain>
    </source>
</reference>